<proteinExistence type="inferred from homology"/>
<evidence type="ECO:0000255" key="1">
    <source>
        <dbReference type="HAMAP-Rule" id="MF_00104"/>
    </source>
</evidence>
<protein>
    <recommendedName>
        <fullName evidence="1">Ribonuclease 3</fullName>
        <ecNumber evidence="1">3.1.26.3</ecNumber>
    </recommendedName>
    <alternativeName>
        <fullName evidence="1">Ribonuclease III</fullName>
        <shortName evidence="1">RNase III</shortName>
    </alternativeName>
</protein>
<name>RNC_STRPB</name>
<dbReference type="EC" id="3.1.26.3" evidence="1"/>
<dbReference type="EMBL" id="CP000261">
    <property type="protein sequence ID" value="ABF35509.1"/>
    <property type="molecule type" value="Genomic_DNA"/>
</dbReference>
<dbReference type="SMR" id="Q1JCZ9"/>
<dbReference type="KEGG" id="spj:MGAS2096_Spy0457"/>
<dbReference type="HOGENOM" id="CLU_000907_1_3_9"/>
<dbReference type="GO" id="GO:0005737">
    <property type="term" value="C:cytoplasm"/>
    <property type="evidence" value="ECO:0007669"/>
    <property type="project" value="UniProtKB-SubCell"/>
</dbReference>
<dbReference type="GO" id="GO:0003725">
    <property type="term" value="F:double-stranded RNA binding"/>
    <property type="evidence" value="ECO:0007669"/>
    <property type="project" value="TreeGrafter"/>
</dbReference>
<dbReference type="GO" id="GO:0046872">
    <property type="term" value="F:metal ion binding"/>
    <property type="evidence" value="ECO:0007669"/>
    <property type="project" value="UniProtKB-KW"/>
</dbReference>
<dbReference type="GO" id="GO:0004525">
    <property type="term" value="F:ribonuclease III activity"/>
    <property type="evidence" value="ECO:0007669"/>
    <property type="project" value="UniProtKB-UniRule"/>
</dbReference>
<dbReference type="GO" id="GO:0019843">
    <property type="term" value="F:rRNA binding"/>
    <property type="evidence" value="ECO:0007669"/>
    <property type="project" value="UniProtKB-KW"/>
</dbReference>
<dbReference type="GO" id="GO:0006397">
    <property type="term" value="P:mRNA processing"/>
    <property type="evidence" value="ECO:0007669"/>
    <property type="project" value="UniProtKB-UniRule"/>
</dbReference>
<dbReference type="GO" id="GO:0010468">
    <property type="term" value="P:regulation of gene expression"/>
    <property type="evidence" value="ECO:0007669"/>
    <property type="project" value="TreeGrafter"/>
</dbReference>
<dbReference type="GO" id="GO:0006364">
    <property type="term" value="P:rRNA processing"/>
    <property type="evidence" value="ECO:0007669"/>
    <property type="project" value="UniProtKB-UniRule"/>
</dbReference>
<dbReference type="GO" id="GO:0008033">
    <property type="term" value="P:tRNA processing"/>
    <property type="evidence" value="ECO:0007669"/>
    <property type="project" value="UniProtKB-KW"/>
</dbReference>
<dbReference type="CDD" id="cd10845">
    <property type="entry name" value="DSRM_RNAse_III_family"/>
    <property type="match status" value="1"/>
</dbReference>
<dbReference type="CDD" id="cd00593">
    <property type="entry name" value="RIBOc"/>
    <property type="match status" value="1"/>
</dbReference>
<dbReference type="FunFam" id="1.10.1520.10:FF:000001">
    <property type="entry name" value="Ribonuclease 3"/>
    <property type="match status" value="1"/>
</dbReference>
<dbReference type="FunFam" id="3.30.160.20:FF:000003">
    <property type="entry name" value="Ribonuclease 3"/>
    <property type="match status" value="1"/>
</dbReference>
<dbReference type="Gene3D" id="3.30.160.20">
    <property type="match status" value="1"/>
</dbReference>
<dbReference type="Gene3D" id="1.10.1520.10">
    <property type="entry name" value="Ribonuclease III domain"/>
    <property type="match status" value="1"/>
</dbReference>
<dbReference type="HAMAP" id="MF_00104">
    <property type="entry name" value="RNase_III"/>
    <property type="match status" value="1"/>
</dbReference>
<dbReference type="InterPro" id="IPR014720">
    <property type="entry name" value="dsRBD_dom"/>
</dbReference>
<dbReference type="InterPro" id="IPR011907">
    <property type="entry name" value="RNase_III"/>
</dbReference>
<dbReference type="InterPro" id="IPR000999">
    <property type="entry name" value="RNase_III_dom"/>
</dbReference>
<dbReference type="InterPro" id="IPR036389">
    <property type="entry name" value="RNase_III_sf"/>
</dbReference>
<dbReference type="NCBIfam" id="TIGR02191">
    <property type="entry name" value="RNaseIII"/>
    <property type="match status" value="1"/>
</dbReference>
<dbReference type="PANTHER" id="PTHR11207:SF0">
    <property type="entry name" value="RIBONUCLEASE 3"/>
    <property type="match status" value="1"/>
</dbReference>
<dbReference type="PANTHER" id="PTHR11207">
    <property type="entry name" value="RIBONUCLEASE III"/>
    <property type="match status" value="1"/>
</dbReference>
<dbReference type="Pfam" id="PF00035">
    <property type="entry name" value="dsrm"/>
    <property type="match status" value="1"/>
</dbReference>
<dbReference type="Pfam" id="PF14622">
    <property type="entry name" value="Ribonucleas_3_3"/>
    <property type="match status" value="1"/>
</dbReference>
<dbReference type="SMART" id="SM00358">
    <property type="entry name" value="DSRM"/>
    <property type="match status" value="1"/>
</dbReference>
<dbReference type="SMART" id="SM00535">
    <property type="entry name" value="RIBOc"/>
    <property type="match status" value="1"/>
</dbReference>
<dbReference type="SUPFAM" id="SSF54768">
    <property type="entry name" value="dsRNA-binding domain-like"/>
    <property type="match status" value="1"/>
</dbReference>
<dbReference type="SUPFAM" id="SSF69065">
    <property type="entry name" value="RNase III domain-like"/>
    <property type="match status" value="1"/>
</dbReference>
<dbReference type="PROSITE" id="PS50137">
    <property type="entry name" value="DS_RBD"/>
    <property type="match status" value="1"/>
</dbReference>
<dbReference type="PROSITE" id="PS00517">
    <property type="entry name" value="RNASE_3_1"/>
    <property type="match status" value="1"/>
</dbReference>
<dbReference type="PROSITE" id="PS50142">
    <property type="entry name" value="RNASE_3_2"/>
    <property type="match status" value="1"/>
</dbReference>
<sequence length="230" mass="25848">MKQLEELLSTSFDIQFNDLTLLETAFTHTSYANEHRLLNVSHNERLEFLGDAVLQLIISEYLFAKYPKKTEGDMSKLRSMIVREESLAGFSRFCSFDAYIKLGKGEEKSGGRRRDTILGDLFEAFLGALLLDKGIDAVRRFLKQVMIPQVEKGNFERVKDYKTCLQEFLQTKGDVAIDYQVISEKGPAHAKQFEVSIVVNGAVLSKGLGKSKKLAEQDAAKNALAQLSEV</sequence>
<comment type="function">
    <text evidence="1">Digests double-stranded RNA. Involved in the processing of primary rRNA transcript to yield the immediate precursors to the large and small rRNAs (23S and 16S). Processes some mRNAs, and tRNAs when they are encoded in the rRNA operon. Processes pre-crRNA and tracrRNA of type II CRISPR loci if present in the organism.</text>
</comment>
<comment type="catalytic activity">
    <reaction evidence="1">
        <text>Endonucleolytic cleavage to 5'-phosphomonoester.</text>
        <dbReference type="EC" id="3.1.26.3"/>
    </reaction>
</comment>
<comment type="cofactor">
    <cofactor evidence="1">
        <name>Mg(2+)</name>
        <dbReference type="ChEBI" id="CHEBI:18420"/>
    </cofactor>
</comment>
<comment type="subunit">
    <text evidence="1">Homodimer.</text>
</comment>
<comment type="subcellular location">
    <subcellularLocation>
        <location evidence="1">Cytoplasm</location>
    </subcellularLocation>
</comment>
<comment type="similarity">
    <text evidence="1">Belongs to the ribonuclease III family.</text>
</comment>
<keyword id="KW-0963">Cytoplasm</keyword>
<keyword id="KW-0255">Endonuclease</keyword>
<keyword id="KW-0378">Hydrolase</keyword>
<keyword id="KW-0460">Magnesium</keyword>
<keyword id="KW-0479">Metal-binding</keyword>
<keyword id="KW-0507">mRNA processing</keyword>
<keyword id="KW-0540">Nuclease</keyword>
<keyword id="KW-0694">RNA-binding</keyword>
<keyword id="KW-0698">rRNA processing</keyword>
<keyword id="KW-0699">rRNA-binding</keyword>
<keyword id="KW-0819">tRNA processing</keyword>
<reference key="1">
    <citation type="journal article" date="2006" name="Proc. Natl. Acad. Sci. U.S.A.">
        <title>Molecular genetic anatomy of inter- and intraserotype variation in the human bacterial pathogen group A Streptococcus.</title>
        <authorList>
            <person name="Beres S.B."/>
            <person name="Richter E.W."/>
            <person name="Nagiec M.J."/>
            <person name="Sumby P."/>
            <person name="Porcella S.F."/>
            <person name="DeLeo F.R."/>
            <person name="Musser J.M."/>
        </authorList>
    </citation>
    <scope>NUCLEOTIDE SEQUENCE [LARGE SCALE GENOMIC DNA]</scope>
    <source>
        <strain>MGAS2096</strain>
    </source>
</reference>
<gene>
    <name evidence="1" type="primary">rnc</name>
    <name type="ordered locus">MGAS2096_Spy0457</name>
</gene>
<accession>Q1JCZ9</accession>
<organism>
    <name type="scientific">Streptococcus pyogenes serotype M12 (strain MGAS2096)</name>
    <dbReference type="NCBI Taxonomy" id="370553"/>
    <lineage>
        <taxon>Bacteria</taxon>
        <taxon>Bacillati</taxon>
        <taxon>Bacillota</taxon>
        <taxon>Bacilli</taxon>
        <taxon>Lactobacillales</taxon>
        <taxon>Streptococcaceae</taxon>
        <taxon>Streptococcus</taxon>
    </lineage>
</organism>
<feature type="chain" id="PRO_1000075835" description="Ribonuclease 3">
    <location>
        <begin position="1"/>
        <end position="230"/>
    </location>
</feature>
<feature type="domain" description="RNase III" evidence="1">
    <location>
        <begin position="1"/>
        <end position="134"/>
    </location>
</feature>
<feature type="domain" description="DRBM" evidence="1">
    <location>
        <begin position="160"/>
        <end position="229"/>
    </location>
</feature>
<feature type="active site" evidence="1">
    <location>
        <position position="51"/>
    </location>
</feature>
<feature type="active site" evidence="1">
    <location>
        <position position="123"/>
    </location>
</feature>
<feature type="binding site" evidence="1">
    <location>
        <position position="47"/>
    </location>
    <ligand>
        <name>Mg(2+)</name>
        <dbReference type="ChEBI" id="CHEBI:18420"/>
    </ligand>
</feature>
<feature type="binding site" evidence="1">
    <location>
        <position position="120"/>
    </location>
    <ligand>
        <name>Mg(2+)</name>
        <dbReference type="ChEBI" id="CHEBI:18420"/>
    </ligand>
</feature>
<feature type="binding site" evidence="1">
    <location>
        <position position="123"/>
    </location>
    <ligand>
        <name>Mg(2+)</name>
        <dbReference type="ChEBI" id="CHEBI:18420"/>
    </ligand>
</feature>